<sequence length="308" mass="34728">MTHLFALSELPLDEIHRLLDEAEAFRSGRIWRPAAPMYVANLFFEPSTRTKCSFEMAERKLGLHVIPFDPERSSVQKGETLYDTVRTLEAIGVDAVVIRHHEDAYFEALRHAVGIPIINAGDGCGHHPTQSLLDLLTIRQEFGAFTGLTVAIIGDIRHSRVARSNAEVLTRLGANVLFSGPAEWKDETNPYGTYVEVDEAIARADVVMLLRIQHERHAETMGLTKEEYHARYGLTLERARRMKSGAIILHPAPVNRGVEIASELVEAKASRIFKQMENGVYVRMAVLKRAMEGRMEHGRMAEKWHVVQ</sequence>
<comment type="function">
    <text evidence="1">Catalyzes the condensation of carbamoyl phosphate and aspartate to form carbamoyl aspartate and inorganic phosphate, the committed step in the de novo pyrimidine nucleotide biosynthesis pathway.</text>
</comment>
<comment type="catalytic activity">
    <reaction evidence="1">
        <text>carbamoyl phosphate + L-aspartate = N-carbamoyl-L-aspartate + phosphate + H(+)</text>
        <dbReference type="Rhea" id="RHEA:20013"/>
        <dbReference type="ChEBI" id="CHEBI:15378"/>
        <dbReference type="ChEBI" id="CHEBI:29991"/>
        <dbReference type="ChEBI" id="CHEBI:32814"/>
        <dbReference type="ChEBI" id="CHEBI:43474"/>
        <dbReference type="ChEBI" id="CHEBI:58228"/>
        <dbReference type="EC" id="2.1.3.2"/>
    </reaction>
</comment>
<comment type="pathway">
    <text evidence="1">Pyrimidine metabolism; UMP biosynthesis via de novo pathway; (S)-dihydroorotate from bicarbonate: step 2/3.</text>
</comment>
<comment type="subunit">
    <text evidence="1">Heterododecamer (2C3:3R2) of six catalytic PyrB chains organized as two trimers (C3), and six regulatory PyrI chains organized as three dimers (R2).</text>
</comment>
<comment type="similarity">
    <text evidence="1">Belongs to the aspartate/ornithine carbamoyltransferase superfamily. ATCase family.</text>
</comment>
<protein>
    <recommendedName>
        <fullName evidence="1">Aspartate carbamoyltransferase catalytic subunit</fullName>
        <ecNumber evidence="1">2.1.3.2</ecNumber>
    </recommendedName>
    <alternativeName>
        <fullName evidence="1">Aspartate transcarbamylase</fullName>
        <shortName evidence="1">ATCase</shortName>
    </alternativeName>
</protein>
<organism>
    <name type="scientific">Geobacillus kaustophilus (strain HTA426)</name>
    <dbReference type="NCBI Taxonomy" id="235909"/>
    <lineage>
        <taxon>Bacteria</taxon>
        <taxon>Bacillati</taxon>
        <taxon>Bacillota</taxon>
        <taxon>Bacilli</taxon>
        <taxon>Bacillales</taxon>
        <taxon>Anoxybacillaceae</taxon>
        <taxon>Geobacillus</taxon>
        <taxon>Geobacillus thermoleovorans group</taxon>
    </lineage>
</organism>
<feature type="chain" id="PRO_0000113136" description="Aspartate carbamoyltransferase catalytic subunit">
    <location>
        <begin position="1"/>
        <end position="308"/>
    </location>
</feature>
<feature type="binding site" evidence="1">
    <location>
        <position position="49"/>
    </location>
    <ligand>
        <name>carbamoyl phosphate</name>
        <dbReference type="ChEBI" id="CHEBI:58228"/>
    </ligand>
</feature>
<feature type="binding site" evidence="1">
    <location>
        <position position="50"/>
    </location>
    <ligand>
        <name>carbamoyl phosphate</name>
        <dbReference type="ChEBI" id="CHEBI:58228"/>
    </ligand>
</feature>
<feature type="binding site" evidence="1">
    <location>
        <position position="77"/>
    </location>
    <ligand>
        <name>L-aspartate</name>
        <dbReference type="ChEBI" id="CHEBI:29991"/>
    </ligand>
</feature>
<feature type="binding site" evidence="1">
    <location>
        <position position="99"/>
    </location>
    <ligand>
        <name>carbamoyl phosphate</name>
        <dbReference type="ChEBI" id="CHEBI:58228"/>
    </ligand>
</feature>
<feature type="binding site" evidence="1">
    <location>
        <position position="127"/>
    </location>
    <ligand>
        <name>carbamoyl phosphate</name>
        <dbReference type="ChEBI" id="CHEBI:58228"/>
    </ligand>
</feature>
<feature type="binding site" evidence="1">
    <location>
        <position position="130"/>
    </location>
    <ligand>
        <name>carbamoyl phosphate</name>
        <dbReference type="ChEBI" id="CHEBI:58228"/>
    </ligand>
</feature>
<feature type="binding site" evidence="1">
    <location>
        <position position="160"/>
    </location>
    <ligand>
        <name>L-aspartate</name>
        <dbReference type="ChEBI" id="CHEBI:29991"/>
    </ligand>
</feature>
<feature type="binding site" evidence="1">
    <location>
        <position position="211"/>
    </location>
    <ligand>
        <name>L-aspartate</name>
        <dbReference type="ChEBI" id="CHEBI:29991"/>
    </ligand>
</feature>
<feature type="binding site" evidence="1">
    <location>
        <position position="252"/>
    </location>
    <ligand>
        <name>carbamoyl phosphate</name>
        <dbReference type="ChEBI" id="CHEBI:58228"/>
    </ligand>
</feature>
<feature type="binding site" evidence="1">
    <location>
        <position position="253"/>
    </location>
    <ligand>
        <name>carbamoyl phosphate</name>
        <dbReference type="ChEBI" id="CHEBI:58228"/>
    </ligand>
</feature>
<dbReference type="EC" id="2.1.3.2" evidence="1"/>
<dbReference type="EMBL" id="BA000043">
    <property type="protein sequence ID" value="BAD75434.1"/>
    <property type="molecule type" value="Genomic_DNA"/>
</dbReference>
<dbReference type="RefSeq" id="WP_011230649.1">
    <property type="nucleotide sequence ID" value="NC_006510.1"/>
</dbReference>
<dbReference type="SMR" id="Q5L0U6"/>
<dbReference type="STRING" id="235909.GK1149"/>
<dbReference type="KEGG" id="gka:GK1149"/>
<dbReference type="eggNOG" id="COG0540">
    <property type="taxonomic scope" value="Bacteria"/>
</dbReference>
<dbReference type="HOGENOM" id="CLU_043846_2_1_9"/>
<dbReference type="UniPathway" id="UPA00070">
    <property type="reaction ID" value="UER00116"/>
</dbReference>
<dbReference type="Proteomes" id="UP000001172">
    <property type="component" value="Chromosome"/>
</dbReference>
<dbReference type="GO" id="GO:0005829">
    <property type="term" value="C:cytosol"/>
    <property type="evidence" value="ECO:0007669"/>
    <property type="project" value="TreeGrafter"/>
</dbReference>
<dbReference type="GO" id="GO:0016597">
    <property type="term" value="F:amino acid binding"/>
    <property type="evidence" value="ECO:0007669"/>
    <property type="project" value="InterPro"/>
</dbReference>
<dbReference type="GO" id="GO:0004070">
    <property type="term" value="F:aspartate carbamoyltransferase activity"/>
    <property type="evidence" value="ECO:0007669"/>
    <property type="project" value="UniProtKB-UniRule"/>
</dbReference>
<dbReference type="GO" id="GO:0006207">
    <property type="term" value="P:'de novo' pyrimidine nucleobase biosynthetic process"/>
    <property type="evidence" value="ECO:0007669"/>
    <property type="project" value="InterPro"/>
</dbReference>
<dbReference type="GO" id="GO:0044205">
    <property type="term" value="P:'de novo' UMP biosynthetic process"/>
    <property type="evidence" value="ECO:0007669"/>
    <property type="project" value="UniProtKB-UniRule"/>
</dbReference>
<dbReference type="GO" id="GO:0006520">
    <property type="term" value="P:amino acid metabolic process"/>
    <property type="evidence" value="ECO:0007669"/>
    <property type="project" value="InterPro"/>
</dbReference>
<dbReference type="FunFam" id="3.40.50.1370:FF:000011">
    <property type="entry name" value="Aspartate carbamoyltransferase"/>
    <property type="match status" value="1"/>
</dbReference>
<dbReference type="Gene3D" id="3.40.50.1370">
    <property type="entry name" value="Aspartate/ornithine carbamoyltransferase"/>
    <property type="match status" value="2"/>
</dbReference>
<dbReference type="HAMAP" id="MF_00001">
    <property type="entry name" value="Asp_carb_tr"/>
    <property type="match status" value="1"/>
</dbReference>
<dbReference type="InterPro" id="IPR006132">
    <property type="entry name" value="Asp/Orn_carbamoyltranf_P-bd"/>
</dbReference>
<dbReference type="InterPro" id="IPR006130">
    <property type="entry name" value="Asp/Orn_carbamoylTrfase"/>
</dbReference>
<dbReference type="InterPro" id="IPR036901">
    <property type="entry name" value="Asp/Orn_carbamoylTrfase_sf"/>
</dbReference>
<dbReference type="InterPro" id="IPR002082">
    <property type="entry name" value="Asp_carbamoyltransf"/>
</dbReference>
<dbReference type="InterPro" id="IPR006131">
    <property type="entry name" value="Asp_carbamoyltransf_Asp/Orn-bd"/>
</dbReference>
<dbReference type="NCBIfam" id="TIGR00670">
    <property type="entry name" value="asp_carb_tr"/>
    <property type="match status" value="1"/>
</dbReference>
<dbReference type="NCBIfam" id="NF002032">
    <property type="entry name" value="PRK00856.1"/>
    <property type="match status" value="1"/>
</dbReference>
<dbReference type="PANTHER" id="PTHR45753:SF6">
    <property type="entry name" value="ASPARTATE CARBAMOYLTRANSFERASE"/>
    <property type="match status" value="1"/>
</dbReference>
<dbReference type="PANTHER" id="PTHR45753">
    <property type="entry name" value="ORNITHINE CARBAMOYLTRANSFERASE, MITOCHONDRIAL"/>
    <property type="match status" value="1"/>
</dbReference>
<dbReference type="Pfam" id="PF00185">
    <property type="entry name" value="OTCace"/>
    <property type="match status" value="1"/>
</dbReference>
<dbReference type="Pfam" id="PF02729">
    <property type="entry name" value="OTCace_N"/>
    <property type="match status" value="1"/>
</dbReference>
<dbReference type="PRINTS" id="PR00100">
    <property type="entry name" value="AOTCASE"/>
</dbReference>
<dbReference type="PRINTS" id="PR00101">
    <property type="entry name" value="ATCASE"/>
</dbReference>
<dbReference type="SUPFAM" id="SSF53671">
    <property type="entry name" value="Aspartate/ornithine carbamoyltransferase"/>
    <property type="match status" value="1"/>
</dbReference>
<dbReference type="PROSITE" id="PS00097">
    <property type="entry name" value="CARBAMOYLTRANSFERASE"/>
    <property type="match status" value="1"/>
</dbReference>
<name>PYRB_GEOKA</name>
<gene>
    <name evidence="1" type="primary">pyrB</name>
    <name type="ordered locus">GK1149</name>
</gene>
<proteinExistence type="inferred from homology"/>
<evidence type="ECO:0000255" key="1">
    <source>
        <dbReference type="HAMAP-Rule" id="MF_00001"/>
    </source>
</evidence>
<accession>Q5L0U6</accession>
<keyword id="KW-0665">Pyrimidine biosynthesis</keyword>
<keyword id="KW-1185">Reference proteome</keyword>
<keyword id="KW-0808">Transferase</keyword>
<reference key="1">
    <citation type="journal article" date="2004" name="Nucleic Acids Res.">
        <title>Thermoadaptation trait revealed by the genome sequence of thermophilic Geobacillus kaustophilus.</title>
        <authorList>
            <person name="Takami H."/>
            <person name="Takaki Y."/>
            <person name="Chee G.-J."/>
            <person name="Nishi S."/>
            <person name="Shimamura S."/>
            <person name="Suzuki H."/>
            <person name="Matsui S."/>
            <person name="Uchiyama I."/>
        </authorList>
    </citation>
    <scope>NUCLEOTIDE SEQUENCE [LARGE SCALE GENOMIC DNA]</scope>
    <source>
        <strain>HTA426</strain>
    </source>
</reference>